<sequence>MFFINIISLIIPILLAVAFLTLVERKVLGYMQLRKGPNIVGPYGLLQPIADAVKLFTKEPLRPLTSSMSMFILAPILALSLALTMWIPLPMPYPLINMNLGVLFMLAMSSLAVYSILWSGWASNSKYALIGALRAVAQTISYEVTLAIILLSVLLMNGSFTLSTLIITQEHMWLIFPAWPLAMMWFISTLAETNRAPFDLTEGESELVSGFNVEYAAGPFALFFLAEYANIIMMNILTTILFFGAFHNPFMPELYSINFTMKTLLLTICFLWIRASYPRFRYDQLMHLLWKNFLPLTLALCMWHVALPIITASIPPQT</sequence>
<geneLocation type="mitochondrion"/>
<accession>Q3L6Y8</accession>
<gene>
    <name type="primary">MT-ND1</name>
    <name type="synonym">MTND1</name>
    <name type="synonym">NADH1</name>
    <name type="synonym">ND1</name>
</gene>
<dbReference type="EC" id="7.1.1.2"/>
<dbReference type="EMBL" id="AY598500">
    <property type="protein sequence ID" value="AAU00446.1"/>
    <property type="molecule type" value="Genomic_DNA"/>
</dbReference>
<dbReference type="EMBL" id="DQ480503">
    <property type="protein sequence ID" value="ABE48155.1"/>
    <property type="molecule type" value="Genomic_DNA"/>
</dbReference>
<dbReference type="EMBL" id="DQ480504">
    <property type="protein sequence ID" value="ABE48168.1"/>
    <property type="molecule type" value="Genomic_DNA"/>
</dbReference>
<dbReference type="EMBL" id="DQ480505">
    <property type="protein sequence ID" value="ABE48181.1"/>
    <property type="molecule type" value="Genomic_DNA"/>
</dbReference>
<dbReference type="EMBL" id="DQ480506">
    <property type="protein sequence ID" value="ABE48194.1"/>
    <property type="molecule type" value="Genomic_DNA"/>
</dbReference>
<dbReference type="EMBL" id="DQ480507">
    <property type="protein sequence ID" value="ABE48207.1"/>
    <property type="molecule type" value="Genomic_DNA"/>
</dbReference>
<dbReference type="EMBL" id="DQ480508">
    <property type="protein sequence ID" value="ABE48220.1"/>
    <property type="molecule type" value="Genomic_DNA"/>
</dbReference>
<dbReference type="RefSeq" id="YP_626728.1">
    <property type="nucleotide sequence ID" value="NC_008092.1"/>
</dbReference>
<dbReference type="SMR" id="Q3L6Y8"/>
<dbReference type="GeneID" id="4097764"/>
<dbReference type="CTD" id="4535"/>
<dbReference type="GO" id="GO:0005743">
    <property type="term" value="C:mitochondrial inner membrane"/>
    <property type="evidence" value="ECO:0007669"/>
    <property type="project" value="UniProtKB-SubCell"/>
</dbReference>
<dbReference type="GO" id="GO:0008137">
    <property type="term" value="F:NADH dehydrogenase (ubiquinone) activity"/>
    <property type="evidence" value="ECO:0007669"/>
    <property type="project" value="UniProtKB-EC"/>
</dbReference>
<dbReference type="GO" id="GO:0009060">
    <property type="term" value="P:aerobic respiration"/>
    <property type="evidence" value="ECO:0007669"/>
    <property type="project" value="TreeGrafter"/>
</dbReference>
<dbReference type="HAMAP" id="MF_01350">
    <property type="entry name" value="NDH1_NuoH"/>
    <property type="match status" value="1"/>
</dbReference>
<dbReference type="InterPro" id="IPR001694">
    <property type="entry name" value="NADH_UbQ_OxRdtase_su1/FPO"/>
</dbReference>
<dbReference type="InterPro" id="IPR018086">
    <property type="entry name" value="NADH_UbQ_OxRdtase_su1_CS"/>
</dbReference>
<dbReference type="PANTHER" id="PTHR11432">
    <property type="entry name" value="NADH DEHYDROGENASE SUBUNIT 1"/>
    <property type="match status" value="1"/>
</dbReference>
<dbReference type="PANTHER" id="PTHR11432:SF3">
    <property type="entry name" value="NADH-UBIQUINONE OXIDOREDUCTASE CHAIN 1"/>
    <property type="match status" value="1"/>
</dbReference>
<dbReference type="Pfam" id="PF00146">
    <property type="entry name" value="NADHdh"/>
    <property type="match status" value="1"/>
</dbReference>
<dbReference type="PROSITE" id="PS00667">
    <property type="entry name" value="COMPLEX1_ND1_1"/>
    <property type="match status" value="1"/>
</dbReference>
<dbReference type="PROSITE" id="PS00668">
    <property type="entry name" value="COMPLEX1_ND1_2"/>
    <property type="match status" value="1"/>
</dbReference>
<protein>
    <recommendedName>
        <fullName>NADH-ubiquinone oxidoreductase chain 1</fullName>
        <ecNumber>7.1.1.2</ecNumber>
    </recommendedName>
    <alternativeName>
        <fullName>NADH dehydrogenase subunit 1</fullName>
    </alternativeName>
</protein>
<name>NU1M_CANLU</name>
<organism>
    <name type="scientific">Canis lupus</name>
    <name type="common">Gray wolf</name>
    <dbReference type="NCBI Taxonomy" id="9612"/>
    <lineage>
        <taxon>Eukaryota</taxon>
        <taxon>Metazoa</taxon>
        <taxon>Chordata</taxon>
        <taxon>Craniata</taxon>
        <taxon>Vertebrata</taxon>
        <taxon>Euteleostomi</taxon>
        <taxon>Mammalia</taxon>
        <taxon>Eutheria</taxon>
        <taxon>Laurasiatheria</taxon>
        <taxon>Carnivora</taxon>
        <taxon>Caniformia</taxon>
        <taxon>Canidae</taxon>
        <taxon>Canis</taxon>
    </lineage>
</organism>
<feature type="chain" id="PRO_0000269893" description="NADH-ubiquinone oxidoreductase chain 1">
    <location>
        <begin position="1"/>
        <end position="318"/>
    </location>
</feature>
<feature type="transmembrane region" description="Helical" evidence="2">
    <location>
        <begin position="2"/>
        <end position="22"/>
    </location>
</feature>
<feature type="transmembrane region" description="Helical" evidence="2">
    <location>
        <begin position="70"/>
        <end position="90"/>
    </location>
</feature>
<feature type="transmembrane region" description="Helical" evidence="2">
    <location>
        <begin position="100"/>
        <end position="120"/>
    </location>
</feature>
<feature type="transmembrane region" description="Helical" evidence="2">
    <location>
        <begin position="147"/>
        <end position="167"/>
    </location>
</feature>
<feature type="transmembrane region" description="Helical" evidence="2">
    <location>
        <begin position="171"/>
        <end position="191"/>
    </location>
</feature>
<feature type="transmembrane region" description="Helical" evidence="2">
    <location>
        <begin position="223"/>
        <end position="243"/>
    </location>
</feature>
<feature type="transmembrane region" description="Helical" evidence="2">
    <location>
        <begin position="253"/>
        <end position="273"/>
    </location>
</feature>
<feature type="transmembrane region" description="Helical" evidence="2">
    <location>
        <begin position="294"/>
        <end position="314"/>
    </location>
</feature>
<evidence type="ECO:0000250" key="1"/>
<evidence type="ECO:0000255" key="2"/>
<evidence type="ECO:0000305" key="3"/>
<comment type="function">
    <text evidence="1">Core subunit of the mitochondrial membrane respiratory chain NADH dehydrogenase (Complex I) that is believed to belong to the minimal assembly required for catalysis. Complex I functions in the transfer of electrons from NADH to the respiratory chain. The immediate electron acceptor for the enzyme is believed to be ubiquinone (By similarity).</text>
</comment>
<comment type="catalytic activity">
    <reaction>
        <text>a ubiquinone + NADH + 5 H(+)(in) = a ubiquinol + NAD(+) + 4 H(+)(out)</text>
        <dbReference type="Rhea" id="RHEA:29091"/>
        <dbReference type="Rhea" id="RHEA-COMP:9565"/>
        <dbReference type="Rhea" id="RHEA-COMP:9566"/>
        <dbReference type="ChEBI" id="CHEBI:15378"/>
        <dbReference type="ChEBI" id="CHEBI:16389"/>
        <dbReference type="ChEBI" id="CHEBI:17976"/>
        <dbReference type="ChEBI" id="CHEBI:57540"/>
        <dbReference type="ChEBI" id="CHEBI:57945"/>
        <dbReference type="EC" id="7.1.1.2"/>
    </reaction>
</comment>
<comment type="subcellular location">
    <subcellularLocation>
        <location evidence="1">Mitochondrion inner membrane</location>
        <topology evidence="1">Multi-pass membrane protein</topology>
    </subcellularLocation>
</comment>
<comment type="similarity">
    <text evidence="3">Belongs to the complex I subunit 1 family.</text>
</comment>
<proteinExistence type="inferred from homology"/>
<reference key="1">
    <citation type="journal article" date="2005" name="Mol. Phylogenet. Evol.">
        <title>A phylogeny of the Caniformia (order Carnivora) based on 12 complete protein-coding mitochondrial genes.</title>
        <authorList>
            <person name="Delisle I."/>
            <person name="Strobeck C."/>
        </authorList>
    </citation>
    <scope>NUCLEOTIDE SEQUENCE [GENOMIC DNA]</scope>
</reference>
<reference key="2">
    <citation type="journal article" date="2006" name="Genome Res.">
        <title>Relaxation of selective constraint on dog mitochondrial DNA following domestication.</title>
        <authorList>
            <person name="Bjornerfeldt S."/>
            <person name="Webster M.T."/>
            <person name="Vila C."/>
        </authorList>
    </citation>
    <scope>NUCLEOTIDE SEQUENCE [GENOMIC DNA]</scope>
</reference>
<keyword id="KW-0249">Electron transport</keyword>
<keyword id="KW-0472">Membrane</keyword>
<keyword id="KW-0496">Mitochondrion</keyword>
<keyword id="KW-0999">Mitochondrion inner membrane</keyword>
<keyword id="KW-0520">NAD</keyword>
<keyword id="KW-0679">Respiratory chain</keyword>
<keyword id="KW-1278">Translocase</keyword>
<keyword id="KW-0812">Transmembrane</keyword>
<keyword id="KW-1133">Transmembrane helix</keyword>
<keyword id="KW-0813">Transport</keyword>
<keyword id="KW-0830">Ubiquinone</keyword>